<organism>
    <name type="scientific">Mytilus edulis</name>
    <name type="common">Blue mussel</name>
    <dbReference type="NCBI Taxonomy" id="6550"/>
    <lineage>
        <taxon>Eukaryota</taxon>
        <taxon>Metazoa</taxon>
        <taxon>Spiralia</taxon>
        <taxon>Lophotrochozoa</taxon>
        <taxon>Mollusca</taxon>
        <taxon>Bivalvia</taxon>
        <taxon>Autobranchia</taxon>
        <taxon>Pteriomorphia</taxon>
        <taxon>Mytilida</taxon>
        <taxon>Mytiloidea</taxon>
        <taxon>Mytilidae</taxon>
        <taxon>Mytilinae</taxon>
        <taxon>Mytilus</taxon>
    </lineage>
</organism>
<accession>P82186</accession>
<dbReference type="EC" id="3.2.1.4"/>
<dbReference type="PDB" id="1WC2">
    <property type="method" value="X-ray"/>
    <property type="resolution" value="1.20 A"/>
    <property type="chains" value="A=1-181"/>
</dbReference>
<dbReference type="PDBsum" id="1WC2"/>
<dbReference type="SMR" id="P82186"/>
<dbReference type="CAZy" id="GH45">
    <property type="family name" value="Glycoside Hydrolase Family 45"/>
</dbReference>
<dbReference type="EvolutionaryTrace" id="P82186"/>
<dbReference type="GO" id="GO:0008810">
    <property type="term" value="F:cellulase activity"/>
    <property type="evidence" value="ECO:0007669"/>
    <property type="project" value="UniProtKB-EC"/>
</dbReference>
<dbReference type="GO" id="GO:0030245">
    <property type="term" value="P:cellulose catabolic process"/>
    <property type="evidence" value="ECO:0007669"/>
    <property type="project" value="UniProtKB-KW"/>
</dbReference>
<dbReference type="CDD" id="cd22278">
    <property type="entry name" value="DPBB_GH45_endoglucanase"/>
    <property type="match status" value="1"/>
</dbReference>
<dbReference type="Gene3D" id="2.40.40.10">
    <property type="entry name" value="RlpA-like domain"/>
    <property type="match status" value="1"/>
</dbReference>
<dbReference type="InterPro" id="IPR036908">
    <property type="entry name" value="RlpA-like_sf"/>
</dbReference>
<dbReference type="Pfam" id="PF22514">
    <property type="entry name" value="EXPB1_D1"/>
    <property type="match status" value="1"/>
</dbReference>
<dbReference type="SUPFAM" id="SSF50685">
    <property type="entry name" value="Barwin-like endoglucanases"/>
    <property type="match status" value="1"/>
</dbReference>
<sequence length="181" mass="19711">NQKCSGNPRRYNGKSCASTTNYHDSHKGACGCGPASGDAQFGWNAGSFVAAASQMYFDSGNKGWCGQHCGQCIKLTTTGGYVPGQGGPVREGLSKTFMITNLCPNIYPNQDWCNQGSQYGGHNKYGYELHLDLENGRSQVTGMGWNNPETTWEVVNCDSEHNHDHRTPSNSMYGQCQCAHQ</sequence>
<keyword id="KW-0002">3D-structure</keyword>
<keyword id="KW-0119">Carbohydrate metabolism</keyword>
<keyword id="KW-0136">Cellulose degradation</keyword>
<keyword id="KW-0903">Direct protein sequencing</keyword>
<keyword id="KW-1015">Disulfide bond</keyword>
<keyword id="KW-0326">Glycosidase</keyword>
<keyword id="KW-0378">Hydrolase</keyword>
<keyword id="KW-0624">Polysaccharide degradation</keyword>
<comment type="function">
    <text evidence="2">Active towards the soluble carboxymethylcellulose (CMC). Possesses expansin activity too.</text>
</comment>
<comment type="catalytic activity">
    <reaction>
        <text>Endohydrolysis of (1-&gt;4)-beta-D-glucosidic linkages in cellulose, lichenin and cereal beta-D-glucans.</text>
        <dbReference type="EC" id="3.2.1.4"/>
    </reaction>
</comment>
<comment type="biophysicochemical properties">
    <phDependence>
        <text>Optimum pH is 4.6.</text>
    </phDependence>
    <temperatureDependence>
        <text>Optimum temperature is 30-50 degrees Celsius.</text>
    </temperatureDependence>
</comment>
<comment type="tissue specificity">
    <text>Digestive gland.</text>
</comment>
<comment type="mass spectrometry" mass="19702.0" method="MALDI" evidence="2"/>
<comment type="similarity">
    <text evidence="3">Belongs to the glycosyl hydrolase 45 (cellulase K) family.</text>
</comment>
<protein>
    <recommendedName>
        <fullName>Endoglucanase</fullName>
        <ecNumber>3.2.1.4</ecNumber>
    </recommendedName>
    <alternativeName>
        <fullName>CMCase</fullName>
    </alternativeName>
    <alternativeName>
        <fullName>Cellulase</fullName>
    </alternativeName>
    <alternativeName>
        <fullName>Endo-1,4-beta-glucanase</fullName>
    </alternativeName>
</protein>
<evidence type="ECO:0000250" key="1"/>
<evidence type="ECO:0000269" key="2">
    <source>
    </source>
</evidence>
<evidence type="ECO:0000305" key="3"/>
<evidence type="ECO:0007829" key="4">
    <source>
        <dbReference type="PDB" id="1WC2"/>
    </source>
</evidence>
<reference key="1">
    <citation type="journal article" date="2000" name="Eur. J. Biochem.">
        <title>Purification, characterization and amino-acid sequence analysis of a thermostable, low molecular mass endo-beta-1,4-glucanase from blue mussel, Mytilus edulis.</title>
        <authorList>
            <person name="Xu B."/>
            <person name="Hellman U."/>
            <person name="Ersson B."/>
            <person name="Janson J.-C."/>
        </authorList>
    </citation>
    <scope>PROTEIN SEQUENCE</scope>
    <scope>FUNCTION</scope>
    <scope>MASS SPECTROMETRY</scope>
    <source>
        <tissue>Digestive gland</tissue>
    </source>
</reference>
<proteinExistence type="evidence at protein level"/>
<feature type="chain" id="PRO_0000184075" description="Endoglucanase">
    <location>
        <begin position="1"/>
        <end position="181"/>
    </location>
</feature>
<feature type="active site" description="Nucleophile" evidence="1">
    <location>
        <position position="24"/>
    </location>
</feature>
<feature type="active site" description="Proton donor" evidence="1">
    <location>
        <position position="132"/>
    </location>
</feature>
<feature type="disulfide bond">
    <location>
        <begin position="4"/>
        <end position="16"/>
    </location>
</feature>
<feature type="disulfide bond">
    <location>
        <begin position="30"/>
        <end position="69"/>
    </location>
</feature>
<feature type="disulfide bond">
    <location>
        <begin position="32"/>
        <end position="176"/>
    </location>
</feature>
<feature type="disulfide bond">
    <location>
        <begin position="65"/>
        <end position="178"/>
    </location>
</feature>
<feature type="disulfide bond">
    <location>
        <begin position="72"/>
        <end position="157"/>
    </location>
</feature>
<feature type="disulfide bond">
    <location>
        <begin position="103"/>
        <end position="113"/>
    </location>
</feature>
<feature type="turn" evidence="4">
    <location>
        <begin position="6"/>
        <end position="9"/>
    </location>
</feature>
<feature type="strand" evidence="4">
    <location>
        <begin position="14"/>
        <end position="22"/>
    </location>
</feature>
<feature type="turn" evidence="4">
    <location>
        <begin position="28"/>
        <end position="31"/>
    </location>
</feature>
<feature type="strand" evidence="4">
    <location>
        <begin position="35"/>
        <end position="39"/>
    </location>
</feature>
<feature type="helix" evidence="4">
    <location>
        <begin position="44"/>
        <end position="46"/>
    </location>
</feature>
<feature type="strand" evidence="4">
    <location>
        <begin position="49"/>
        <end position="53"/>
    </location>
</feature>
<feature type="helix" evidence="4">
    <location>
        <begin position="54"/>
        <end position="57"/>
    </location>
</feature>
<feature type="strand" evidence="4">
    <location>
        <begin position="63"/>
        <end position="65"/>
    </location>
</feature>
<feature type="turn" evidence="4">
    <location>
        <begin position="67"/>
        <end position="70"/>
    </location>
</feature>
<feature type="strand" evidence="4">
    <location>
        <begin position="72"/>
        <end position="81"/>
    </location>
</feature>
<feature type="strand" evidence="4">
    <location>
        <begin position="94"/>
        <end position="103"/>
    </location>
</feature>
<feature type="turn" evidence="4">
    <location>
        <begin position="110"/>
        <end position="112"/>
    </location>
</feature>
<feature type="strand" evidence="4">
    <location>
        <begin position="116"/>
        <end position="120"/>
    </location>
</feature>
<feature type="strand" evidence="4">
    <location>
        <begin position="128"/>
        <end position="134"/>
    </location>
</feature>
<feature type="helix" evidence="4">
    <location>
        <begin position="141"/>
        <end position="143"/>
    </location>
</feature>
<feature type="strand" evidence="4">
    <location>
        <begin position="146"/>
        <end position="155"/>
    </location>
</feature>
<feature type="helix" evidence="4">
    <location>
        <begin position="157"/>
        <end position="163"/>
    </location>
</feature>
<feature type="helix" evidence="4">
    <location>
        <begin position="170"/>
        <end position="173"/>
    </location>
</feature>
<feature type="helix" evidence="4">
    <location>
        <begin position="177"/>
        <end position="179"/>
    </location>
</feature>
<name>GUN_MYTED</name>